<organism>
    <name type="scientific">Yersinia pseudotuberculosis serotype I (strain IP32953)</name>
    <dbReference type="NCBI Taxonomy" id="273123"/>
    <lineage>
        <taxon>Bacteria</taxon>
        <taxon>Pseudomonadati</taxon>
        <taxon>Pseudomonadota</taxon>
        <taxon>Gammaproteobacteria</taxon>
        <taxon>Enterobacterales</taxon>
        <taxon>Yersiniaceae</taxon>
        <taxon>Yersinia</taxon>
    </lineage>
</organism>
<dbReference type="EMBL" id="BX936398">
    <property type="protein sequence ID" value="CAH22098.1"/>
    <property type="molecule type" value="Genomic_DNA"/>
</dbReference>
<dbReference type="RefSeq" id="WP_002222202.1">
    <property type="nucleotide sequence ID" value="NZ_CP009712.1"/>
</dbReference>
<dbReference type="SMR" id="Q667Y0"/>
<dbReference type="GeneID" id="96662219"/>
<dbReference type="KEGG" id="ypo:BZ17_3771"/>
<dbReference type="KEGG" id="yps:YPTB2860"/>
<dbReference type="PATRIC" id="fig|273123.14.peg.3957"/>
<dbReference type="PHI-base" id="PHI:3043"/>
<dbReference type="PHI-base" id="PHI:7900"/>
<dbReference type="Proteomes" id="UP000001011">
    <property type="component" value="Chromosome"/>
</dbReference>
<dbReference type="CollecTF" id="EXPREG_00000f10"/>
<dbReference type="GO" id="GO:0005829">
    <property type="term" value="C:cytosol"/>
    <property type="evidence" value="ECO:0007669"/>
    <property type="project" value="TreeGrafter"/>
</dbReference>
<dbReference type="GO" id="GO:0051537">
    <property type="term" value="F:2 iron, 2 sulfur cluster binding"/>
    <property type="evidence" value="ECO:0007669"/>
    <property type="project" value="UniProtKB-KW"/>
</dbReference>
<dbReference type="GO" id="GO:0003700">
    <property type="term" value="F:DNA-binding transcription factor activity"/>
    <property type="evidence" value="ECO:0007669"/>
    <property type="project" value="UniProtKB-UniRule"/>
</dbReference>
<dbReference type="GO" id="GO:0003690">
    <property type="term" value="F:double-stranded DNA binding"/>
    <property type="evidence" value="ECO:0007669"/>
    <property type="project" value="UniProtKB-UniRule"/>
</dbReference>
<dbReference type="GO" id="GO:0005506">
    <property type="term" value="F:iron ion binding"/>
    <property type="evidence" value="ECO:0007669"/>
    <property type="project" value="UniProtKB-UniRule"/>
</dbReference>
<dbReference type="GO" id="GO:0045892">
    <property type="term" value="P:negative regulation of DNA-templated transcription"/>
    <property type="evidence" value="ECO:0000269"/>
    <property type="project" value="CollecTF"/>
</dbReference>
<dbReference type="FunFam" id="1.10.10.10:FF:000026">
    <property type="entry name" value="HTH-type transcriptional regulator IscR"/>
    <property type="match status" value="1"/>
</dbReference>
<dbReference type="Gene3D" id="1.10.10.10">
    <property type="entry name" value="Winged helix-like DNA-binding domain superfamily/Winged helix DNA-binding domain"/>
    <property type="match status" value="1"/>
</dbReference>
<dbReference type="HAMAP" id="MF_01176">
    <property type="entry name" value="HTH_type_IscR"/>
    <property type="match status" value="1"/>
</dbReference>
<dbReference type="InterPro" id="IPR010242">
    <property type="entry name" value="TF_HTH_IscR"/>
</dbReference>
<dbReference type="InterPro" id="IPR030489">
    <property type="entry name" value="TR_Rrf2-type_CS"/>
</dbReference>
<dbReference type="InterPro" id="IPR000944">
    <property type="entry name" value="Tscrpt_reg_Rrf2"/>
</dbReference>
<dbReference type="InterPro" id="IPR036388">
    <property type="entry name" value="WH-like_DNA-bd_sf"/>
</dbReference>
<dbReference type="InterPro" id="IPR036390">
    <property type="entry name" value="WH_DNA-bd_sf"/>
</dbReference>
<dbReference type="NCBIfam" id="TIGR02010">
    <property type="entry name" value="IscR"/>
    <property type="match status" value="1"/>
</dbReference>
<dbReference type="NCBIfam" id="NF008110">
    <property type="entry name" value="PRK10857.1"/>
    <property type="match status" value="1"/>
</dbReference>
<dbReference type="NCBIfam" id="TIGR00738">
    <property type="entry name" value="rrf2_super"/>
    <property type="match status" value="1"/>
</dbReference>
<dbReference type="PANTHER" id="PTHR33221:SF5">
    <property type="entry name" value="HTH-TYPE TRANSCRIPTIONAL REGULATOR ISCR"/>
    <property type="match status" value="1"/>
</dbReference>
<dbReference type="PANTHER" id="PTHR33221">
    <property type="entry name" value="WINGED HELIX-TURN-HELIX TRANSCRIPTIONAL REGULATOR, RRF2 FAMILY"/>
    <property type="match status" value="1"/>
</dbReference>
<dbReference type="Pfam" id="PF02082">
    <property type="entry name" value="Rrf2"/>
    <property type="match status" value="1"/>
</dbReference>
<dbReference type="SUPFAM" id="SSF46785">
    <property type="entry name" value="Winged helix' DNA-binding domain"/>
    <property type="match status" value="1"/>
</dbReference>
<dbReference type="PROSITE" id="PS01332">
    <property type="entry name" value="HTH_RRF2_1"/>
    <property type="match status" value="1"/>
</dbReference>
<dbReference type="PROSITE" id="PS51197">
    <property type="entry name" value="HTH_RRF2_2"/>
    <property type="match status" value="1"/>
</dbReference>
<feature type="chain" id="PRO_0000268938" description="HTH-type transcriptional regulator IscR">
    <location>
        <begin position="1"/>
        <end position="164"/>
    </location>
</feature>
<feature type="domain" description="HTH rrf2-type" evidence="1">
    <location>
        <begin position="2"/>
        <end position="131"/>
    </location>
</feature>
<feature type="DNA-binding region" description="H-T-H motif" evidence="1">
    <location>
        <begin position="28"/>
        <end position="51"/>
    </location>
</feature>
<feature type="region of interest" description="Disordered" evidence="2">
    <location>
        <begin position="143"/>
        <end position="164"/>
    </location>
</feature>
<feature type="compositionally biased region" description="Polar residues" evidence="2">
    <location>
        <begin position="152"/>
        <end position="164"/>
    </location>
</feature>
<feature type="binding site" evidence="1">
    <location>
        <position position="92"/>
    </location>
    <ligand>
        <name>[2Fe-2S] cluster</name>
        <dbReference type="ChEBI" id="CHEBI:190135"/>
    </ligand>
</feature>
<feature type="binding site" evidence="1">
    <location>
        <position position="98"/>
    </location>
    <ligand>
        <name>[2Fe-2S] cluster</name>
        <dbReference type="ChEBI" id="CHEBI:190135"/>
    </ligand>
</feature>
<feature type="binding site" evidence="1">
    <location>
        <position position="104"/>
    </location>
    <ligand>
        <name>[2Fe-2S] cluster</name>
        <dbReference type="ChEBI" id="CHEBI:190135"/>
    </ligand>
</feature>
<protein>
    <recommendedName>
        <fullName evidence="1">HTH-type transcriptional regulator IscR</fullName>
    </recommendedName>
</protein>
<proteinExistence type="inferred from homology"/>
<keyword id="KW-0001">2Fe-2S</keyword>
<keyword id="KW-0010">Activator</keyword>
<keyword id="KW-0238">DNA-binding</keyword>
<keyword id="KW-0408">Iron</keyword>
<keyword id="KW-0411">Iron-sulfur</keyword>
<keyword id="KW-0479">Metal-binding</keyword>
<keyword id="KW-0678">Repressor</keyword>
<keyword id="KW-0804">Transcription</keyword>
<keyword id="KW-0805">Transcription regulation</keyword>
<gene>
    <name evidence="1" type="primary">iscR</name>
    <name type="ordered locus">YPTB2860</name>
</gene>
<reference key="1">
    <citation type="journal article" date="2004" name="Proc. Natl. Acad. Sci. U.S.A.">
        <title>Insights into the evolution of Yersinia pestis through whole-genome comparison with Yersinia pseudotuberculosis.</title>
        <authorList>
            <person name="Chain P.S.G."/>
            <person name="Carniel E."/>
            <person name="Larimer F.W."/>
            <person name="Lamerdin J."/>
            <person name="Stoutland P.O."/>
            <person name="Regala W.M."/>
            <person name="Georgescu A.M."/>
            <person name="Vergez L.M."/>
            <person name="Land M.L."/>
            <person name="Motin V.L."/>
            <person name="Brubaker R.R."/>
            <person name="Fowler J."/>
            <person name="Hinnebusch J."/>
            <person name="Marceau M."/>
            <person name="Medigue C."/>
            <person name="Simonet M."/>
            <person name="Chenal-Francisque V."/>
            <person name="Souza B."/>
            <person name="Dacheux D."/>
            <person name="Elliott J.M."/>
            <person name="Derbise A."/>
            <person name="Hauser L.J."/>
            <person name="Garcia E."/>
        </authorList>
    </citation>
    <scope>NUCLEOTIDE SEQUENCE [LARGE SCALE GENOMIC DNA]</scope>
    <source>
        <strain>IP32953</strain>
    </source>
</reference>
<evidence type="ECO:0000255" key="1">
    <source>
        <dbReference type="HAMAP-Rule" id="MF_01176"/>
    </source>
</evidence>
<evidence type="ECO:0000256" key="2">
    <source>
        <dbReference type="SAM" id="MobiDB-lite"/>
    </source>
</evidence>
<name>ISCR_YERPS</name>
<sequence>MRLTSKGRYAVTAMLDVALHSQDGPVPLADISERQGISLSYLEQLFSRLRKNGLVASVRGPGGGYLLGKDASAIAVGAVITAVDESVDATRCQGKEGCQGGNRCLTHTLWRDLSERISSFLNNITLAELVNNQDILEVADRQNNDTRRTANGRPQETINVNLRA</sequence>
<accession>Q667Y0</accession>
<comment type="function">
    <text evidence="1">Regulates the transcription of several operons and genes involved in the biogenesis of Fe-S clusters and Fe-S-containing proteins.</text>
</comment>
<comment type="cofactor">
    <cofactor evidence="1">
        <name>[2Fe-2S] cluster</name>
        <dbReference type="ChEBI" id="CHEBI:190135"/>
    </cofactor>
    <text evidence="1">Binds 1 [2Fe-2S] cluster.</text>
</comment>